<reference key="1">
    <citation type="journal article" date="1996" name="Science">
        <title>Complete genome sequence of the methanogenic archaeon, Methanococcus jannaschii.</title>
        <authorList>
            <person name="Bult C.J."/>
            <person name="White O."/>
            <person name="Olsen G.J."/>
            <person name="Zhou L."/>
            <person name="Fleischmann R.D."/>
            <person name="Sutton G.G."/>
            <person name="Blake J.A."/>
            <person name="FitzGerald L.M."/>
            <person name="Clayton R.A."/>
            <person name="Gocayne J.D."/>
            <person name="Kerlavage A.R."/>
            <person name="Dougherty B.A."/>
            <person name="Tomb J.-F."/>
            <person name="Adams M.D."/>
            <person name="Reich C.I."/>
            <person name="Overbeek R."/>
            <person name="Kirkness E.F."/>
            <person name="Weinstock K.G."/>
            <person name="Merrick J.M."/>
            <person name="Glodek A."/>
            <person name="Scott J.L."/>
            <person name="Geoghagen N.S.M."/>
            <person name="Weidman J.F."/>
            <person name="Fuhrmann J.L."/>
            <person name="Nguyen D."/>
            <person name="Utterback T.R."/>
            <person name="Kelley J.M."/>
            <person name="Peterson J.D."/>
            <person name="Sadow P.W."/>
            <person name="Hanna M.C."/>
            <person name="Cotton M.D."/>
            <person name="Roberts K.M."/>
            <person name="Hurst M.A."/>
            <person name="Kaine B.P."/>
            <person name="Borodovsky M."/>
            <person name="Klenk H.-P."/>
            <person name="Fraser C.M."/>
            <person name="Smith H.O."/>
            <person name="Woese C.R."/>
            <person name="Venter J.C."/>
        </authorList>
    </citation>
    <scope>NUCLEOTIDE SEQUENCE [LARGE SCALE GENOMIC DNA]</scope>
    <source>
        <strain>ATCC 43067 / DSM 2661 / JAL-1 / JCM 10045 / NBRC 100440</strain>
    </source>
</reference>
<name>PURL_METJA</name>
<proteinExistence type="inferred from homology"/>
<accession>Q58660</accession>
<dbReference type="EC" id="6.3.5.3" evidence="1"/>
<dbReference type="EMBL" id="L77117">
    <property type="protein sequence ID" value="AAB99270.1"/>
    <property type="molecule type" value="Genomic_DNA"/>
</dbReference>
<dbReference type="PIR" id="G64457">
    <property type="entry name" value="G64457"/>
</dbReference>
<dbReference type="RefSeq" id="WP_010870777.1">
    <property type="nucleotide sequence ID" value="NC_000909.1"/>
</dbReference>
<dbReference type="SMR" id="Q58660"/>
<dbReference type="FunCoup" id="Q58660">
    <property type="interactions" value="249"/>
</dbReference>
<dbReference type="STRING" id="243232.MJ_1264"/>
<dbReference type="PaxDb" id="243232-MJ_1264"/>
<dbReference type="EnsemblBacteria" id="AAB99270">
    <property type="protein sequence ID" value="AAB99270"/>
    <property type="gene ID" value="MJ_1264"/>
</dbReference>
<dbReference type="GeneID" id="1452162"/>
<dbReference type="KEGG" id="mja:MJ_1264"/>
<dbReference type="eggNOG" id="arCOG00641">
    <property type="taxonomic scope" value="Archaea"/>
</dbReference>
<dbReference type="HOGENOM" id="CLU_003100_0_1_2"/>
<dbReference type="InParanoid" id="Q58660"/>
<dbReference type="OrthoDB" id="8251at2157"/>
<dbReference type="PhylomeDB" id="Q58660"/>
<dbReference type="UniPathway" id="UPA00074">
    <property type="reaction ID" value="UER00128"/>
</dbReference>
<dbReference type="Proteomes" id="UP000000805">
    <property type="component" value="Chromosome"/>
</dbReference>
<dbReference type="GO" id="GO:0005737">
    <property type="term" value="C:cytoplasm"/>
    <property type="evidence" value="ECO:0007669"/>
    <property type="project" value="UniProtKB-SubCell"/>
</dbReference>
<dbReference type="GO" id="GO:0005524">
    <property type="term" value="F:ATP binding"/>
    <property type="evidence" value="ECO:0007669"/>
    <property type="project" value="UniProtKB-UniRule"/>
</dbReference>
<dbReference type="GO" id="GO:0000287">
    <property type="term" value="F:magnesium ion binding"/>
    <property type="evidence" value="ECO:0007669"/>
    <property type="project" value="UniProtKB-UniRule"/>
</dbReference>
<dbReference type="GO" id="GO:0004642">
    <property type="term" value="F:phosphoribosylformylglycinamidine synthase activity"/>
    <property type="evidence" value="ECO:0000318"/>
    <property type="project" value="GO_Central"/>
</dbReference>
<dbReference type="GO" id="GO:0006189">
    <property type="term" value="P:'de novo' IMP biosynthetic process"/>
    <property type="evidence" value="ECO:0007669"/>
    <property type="project" value="UniProtKB-UniRule"/>
</dbReference>
<dbReference type="GO" id="GO:0006164">
    <property type="term" value="P:purine nucleotide biosynthetic process"/>
    <property type="evidence" value="ECO:0000318"/>
    <property type="project" value="GO_Central"/>
</dbReference>
<dbReference type="CDD" id="cd02203">
    <property type="entry name" value="PurL_repeat1"/>
    <property type="match status" value="1"/>
</dbReference>
<dbReference type="CDD" id="cd02204">
    <property type="entry name" value="PurL_repeat2"/>
    <property type="match status" value="1"/>
</dbReference>
<dbReference type="Gene3D" id="3.90.650.10">
    <property type="entry name" value="PurM-like C-terminal domain"/>
    <property type="match status" value="2"/>
</dbReference>
<dbReference type="Gene3D" id="3.30.1330.10">
    <property type="entry name" value="PurM-like, N-terminal domain"/>
    <property type="match status" value="2"/>
</dbReference>
<dbReference type="HAMAP" id="MF_00420">
    <property type="entry name" value="PurL_2"/>
    <property type="match status" value="1"/>
</dbReference>
<dbReference type="InterPro" id="IPR010074">
    <property type="entry name" value="PRibForGlyAmidine_synth_PurL"/>
</dbReference>
<dbReference type="InterPro" id="IPR041609">
    <property type="entry name" value="PurL_linker"/>
</dbReference>
<dbReference type="InterPro" id="IPR010918">
    <property type="entry name" value="PurM-like_C_dom"/>
</dbReference>
<dbReference type="InterPro" id="IPR036676">
    <property type="entry name" value="PurM-like_C_sf"/>
</dbReference>
<dbReference type="InterPro" id="IPR016188">
    <property type="entry name" value="PurM-like_N"/>
</dbReference>
<dbReference type="InterPro" id="IPR036921">
    <property type="entry name" value="PurM-like_N_sf"/>
</dbReference>
<dbReference type="NCBIfam" id="TIGR01736">
    <property type="entry name" value="FGAM_synth_II"/>
    <property type="match status" value="1"/>
</dbReference>
<dbReference type="NCBIfam" id="NF002290">
    <property type="entry name" value="PRK01213.1"/>
    <property type="match status" value="1"/>
</dbReference>
<dbReference type="PANTHER" id="PTHR43555">
    <property type="entry name" value="PHOSPHORIBOSYLFORMYLGLYCINAMIDINE SYNTHASE SUBUNIT PURL"/>
    <property type="match status" value="1"/>
</dbReference>
<dbReference type="PANTHER" id="PTHR43555:SF1">
    <property type="entry name" value="PHOSPHORIBOSYLFORMYLGLYCINAMIDINE SYNTHASE SUBUNIT PURL"/>
    <property type="match status" value="1"/>
</dbReference>
<dbReference type="Pfam" id="PF00586">
    <property type="entry name" value="AIRS"/>
    <property type="match status" value="2"/>
</dbReference>
<dbReference type="Pfam" id="PF02769">
    <property type="entry name" value="AIRS_C"/>
    <property type="match status" value="2"/>
</dbReference>
<dbReference type="Pfam" id="PF18072">
    <property type="entry name" value="FGAR-AT_linker"/>
    <property type="match status" value="1"/>
</dbReference>
<dbReference type="PIRSF" id="PIRSF001587">
    <property type="entry name" value="FGAM_synthase_II"/>
    <property type="match status" value="1"/>
</dbReference>
<dbReference type="SUPFAM" id="SSF56042">
    <property type="entry name" value="PurM C-terminal domain-like"/>
    <property type="match status" value="2"/>
</dbReference>
<dbReference type="SUPFAM" id="SSF55326">
    <property type="entry name" value="PurM N-terminal domain-like"/>
    <property type="match status" value="2"/>
</dbReference>
<organism>
    <name type="scientific">Methanocaldococcus jannaschii (strain ATCC 43067 / DSM 2661 / JAL-1 / JCM 10045 / NBRC 100440)</name>
    <name type="common">Methanococcus jannaschii</name>
    <dbReference type="NCBI Taxonomy" id="243232"/>
    <lineage>
        <taxon>Archaea</taxon>
        <taxon>Methanobacteriati</taxon>
        <taxon>Methanobacteriota</taxon>
        <taxon>Methanomada group</taxon>
        <taxon>Methanococci</taxon>
        <taxon>Methanococcales</taxon>
        <taxon>Methanocaldococcaceae</taxon>
        <taxon>Methanocaldococcus</taxon>
    </lineage>
</organism>
<evidence type="ECO:0000255" key="1">
    <source>
        <dbReference type="HAMAP-Rule" id="MF_00420"/>
    </source>
</evidence>
<sequence length="733" mass="80866">MDENDLKYIEKVLGRKPNHIELAMFENLWSEHCAYRTSKKLLRMFAKTVNEKTSKNIVVGIGDDAAVIRLKNDICLAIAMESHNHPSYIDPYNGAATGVGGIVRDVLSMGAKPIALLDPLRFGDIFGKEGDKVRWLIEGVVKGIGDYGNRIGVPTVGGECEFDSSFDYNNLVNVVCVGLVKENEIITGKAKEPGLSLILIGSTGRDGIGGASFASKDLTEESEEERPSVQVGDAFSEKCLIDAVLEAVKTGKVKAMKDLGAAGLSGASSEMCYGGGVGCELYLENVVLREPLTPYEIMVSESQERMLLAVEPGSEEEIIEIFKKYELPASVIGKTIPEKRIIAKYKGEVVVDLPLDLLCEAPLYDREGKEDLKEKEDDKEKIKMPEDLNAVLLKLLESPNICSKEWIYQQYDHEVQIRTVVKPGKDAAVLRINEVYPMGIALTTDCNSRYCKLNPYVGAVNAVAEAVRNLATVGAEPIAMLDNLNFGNPERPERFWQLAECIKGLADAAEFFEIPVVGGNVSLYNETVIEGKEHPINPTPAIFVLGKVEDVEKVPGVLDNKIKEGDILIITNETKDEMGGSEYYKVIHNTEEGRVPRVDLEKEKKIYEEVREVVKEGLVSEAVDCSRGGLAVALAKMAVLNNIGLEVDLTEYNKNNLRDDILLFSETSGRIILAVRDENKDKVLSKLSSAYIIGKVGGSRLKIKINEKDVVNLDVEEMKKRYYEAFPKMMGEL</sequence>
<gene>
    <name evidence="1" type="primary">purL</name>
    <name type="ordered locus">MJ1264</name>
</gene>
<feature type="chain" id="PRO_0000100513" description="Phosphoribosylformylglycinamidine synthase subunit PurL">
    <location>
        <begin position="1"/>
        <end position="733"/>
    </location>
</feature>
<feature type="active site" evidence="1">
    <location>
        <position position="32"/>
    </location>
</feature>
<feature type="active site" description="Proton acceptor" evidence="1">
    <location>
        <position position="83"/>
    </location>
</feature>
<feature type="binding site" evidence="1">
    <location>
        <position position="35"/>
    </location>
    <ligand>
        <name>ATP</name>
        <dbReference type="ChEBI" id="CHEBI:30616"/>
    </ligand>
</feature>
<feature type="binding site" evidence="1">
    <location>
        <position position="81"/>
    </location>
    <ligand>
        <name>Mg(2+)</name>
        <dbReference type="ChEBI" id="CHEBI:18420"/>
        <label>1</label>
    </ligand>
</feature>
<feature type="binding site" evidence="1">
    <location>
        <begin position="82"/>
        <end position="85"/>
    </location>
    <ligand>
        <name>substrate</name>
    </ligand>
</feature>
<feature type="binding site" evidence="1">
    <location>
        <position position="104"/>
    </location>
    <ligand>
        <name>substrate</name>
    </ligand>
</feature>
<feature type="binding site" evidence="1">
    <location>
        <position position="105"/>
    </location>
    <ligand>
        <name>Mg(2+)</name>
        <dbReference type="ChEBI" id="CHEBI:18420"/>
        <label>2</label>
    </ligand>
</feature>
<feature type="binding site" evidence="1">
    <location>
        <position position="230"/>
    </location>
    <ligand>
        <name>substrate</name>
    </ligand>
</feature>
<feature type="binding site" evidence="1">
    <location>
        <position position="258"/>
    </location>
    <ligand>
        <name>Mg(2+)</name>
        <dbReference type="ChEBI" id="CHEBI:18420"/>
        <label>2</label>
    </ligand>
</feature>
<feature type="binding site" evidence="1">
    <location>
        <begin position="301"/>
        <end position="303"/>
    </location>
    <ligand>
        <name>substrate</name>
    </ligand>
</feature>
<feature type="binding site" evidence="1">
    <location>
        <position position="482"/>
    </location>
    <ligand>
        <name>ATP</name>
        <dbReference type="ChEBI" id="CHEBI:30616"/>
    </ligand>
</feature>
<feature type="binding site" evidence="1">
    <location>
        <position position="519"/>
    </location>
    <ligand>
        <name>ATP</name>
        <dbReference type="ChEBI" id="CHEBI:30616"/>
    </ligand>
</feature>
<feature type="binding site" evidence="1">
    <location>
        <position position="520"/>
    </location>
    <ligand>
        <name>Mg(2+)</name>
        <dbReference type="ChEBI" id="CHEBI:18420"/>
        <label>1</label>
    </ligand>
</feature>
<feature type="binding site" evidence="1">
    <location>
        <position position="522"/>
    </location>
    <ligand>
        <name>substrate</name>
    </ligand>
</feature>
<keyword id="KW-0067">ATP-binding</keyword>
<keyword id="KW-0963">Cytoplasm</keyword>
<keyword id="KW-0436">Ligase</keyword>
<keyword id="KW-0460">Magnesium</keyword>
<keyword id="KW-0479">Metal-binding</keyword>
<keyword id="KW-0547">Nucleotide-binding</keyword>
<keyword id="KW-0658">Purine biosynthesis</keyword>
<keyword id="KW-1185">Reference proteome</keyword>
<comment type="function">
    <text evidence="1">Part of the phosphoribosylformylglycinamidine synthase complex involved in the purines biosynthetic pathway. Catalyzes the ATP-dependent conversion of formylglycinamide ribonucleotide (FGAR) and glutamine to yield formylglycinamidine ribonucleotide (FGAM) and glutamate. The FGAM synthase complex is composed of three subunits. PurQ produces an ammonia molecule by converting glutamine to glutamate. PurL transfers the ammonia molecule to FGAR to form FGAM in an ATP-dependent manner. PurS interacts with PurQ and PurL and is thought to assist in the transfer of the ammonia molecule from PurQ to PurL.</text>
</comment>
<comment type="catalytic activity">
    <reaction evidence="1">
        <text>N(2)-formyl-N(1)-(5-phospho-beta-D-ribosyl)glycinamide + L-glutamine + ATP + H2O = 2-formamido-N(1)-(5-O-phospho-beta-D-ribosyl)acetamidine + L-glutamate + ADP + phosphate + H(+)</text>
        <dbReference type="Rhea" id="RHEA:17129"/>
        <dbReference type="ChEBI" id="CHEBI:15377"/>
        <dbReference type="ChEBI" id="CHEBI:15378"/>
        <dbReference type="ChEBI" id="CHEBI:29985"/>
        <dbReference type="ChEBI" id="CHEBI:30616"/>
        <dbReference type="ChEBI" id="CHEBI:43474"/>
        <dbReference type="ChEBI" id="CHEBI:58359"/>
        <dbReference type="ChEBI" id="CHEBI:147286"/>
        <dbReference type="ChEBI" id="CHEBI:147287"/>
        <dbReference type="ChEBI" id="CHEBI:456216"/>
        <dbReference type="EC" id="6.3.5.3"/>
    </reaction>
</comment>
<comment type="pathway">
    <text evidence="1">Purine metabolism; IMP biosynthesis via de novo pathway; 5-amino-1-(5-phospho-D-ribosyl)imidazole from N(2)-formyl-N(1)-(5-phospho-D-ribosyl)glycinamide: step 1/2.</text>
</comment>
<comment type="subunit">
    <text evidence="1">Monomer. Part of the FGAM synthase complex composed of 1 PurL, 1 PurQ and 2 PurS subunits.</text>
</comment>
<comment type="subcellular location">
    <subcellularLocation>
        <location evidence="1">Cytoplasm</location>
    </subcellularLocation>
</comment>
<comment type="similarity">
    <text evidence="1">Belongs to the FGAMS family.</text>
</comment>
<protein>
    <recommendedName>
        <fullName evidence="1">Phosphoribosylformylglycinamidine synthase subunit PurL</fullName>
        <shortName evidence="1">FGAM synthase</shortName>
        <ecNumber evidence="1">6.3.5.3</ecNumber>
    </recommendedName>
    <alternativeName>
        <fullName evidence="1">Formylglycinamide ribonucleotide amidotransferase subunit II</fullName>
        <shortName evidence="1">FGAR amidotransferase II</shortName>
        <shortName evidence="1">FGAR-AT II</shortName>
    </alternativeName>
    <alternativeName>
        <fullName evidence="1">Glutamine amidotransferase PurL</fullName>
    </alternativeName>
    <alternativeName>
        <fullName evidence="1">Phosphoribosylformylglycinamidine synthase subunit II</fullName>
    </alternativeName>
</protein>